<keyword id="KW-0028">Amino-acid biosynthesis</keyword>
<keyword id="KW-0963">Cytoplasm</keyword>
<keyword id="KW-0413">Isomerase</keyword>
<keyword id="KW-0457">Lysine biosynthesis</keyword>
<keyword id="KW-1185">Reference proteome</keyword>
<organism>
    <name type="scientific">Alkaliphilus metalliredigens (strain QYMF)</name>
    <dbReference type="NCBI Taxonomy" id="293826"/>
    <lineage>
        <taxon>Bacteria</taxon>
        <taxon>Bacillati</taxon>
        <taxon>Bacillota</taxon>
        <taxon>Clostridia</taxon>
        <taxon>Peptostreptococcales</taxon>
        <taxon>Natronincolaceae</taxon>
        <taxon>Alkaliphilus</taxon>
    </lineage>
</organism>
<gene>
    <name evidence="1" type="primary">dapF</name>
    <name type="ordered locus">Amet_2793</name>
</gene>
<sequence>MEIKFKKMHGTGNDFIMIYYEDYPFEQHFNQLAKEVCHRHFGIGADGLMIVKESSVADVQMKYFNSDGSEAGMCGNGIRCFAKFVYDEGLVKKEIFTVETLSGVKELQVATVEEKVSSVRVNMGKMVLDPKQIPVNSEGLQFINEQLMIDGEKYTISTVLLGVPHTIIFMETLDLDRVKRVGKIIENHQLFPENTNVNFAQIINQNTIRVRTWERGAGYTLACGTGVSSVCGIANHLSLVGPNVVVEIEGGKLDIEIAPEGDIYMEGPAKDICKGVYLNSLIK</sequence>
<proteinExistence type="inferred from homology"/>
<comment type="function">
    <text evidence="1">Catalyzes the stereoinversion of LL-2,6-diaminopimelate (L,L-DAP) to meso-diaminopimelate (meso-DAP), a precursor of L-lysine and an essential component of the bacterial peptidoglycan.</text>
</comment>
<comment type="catalytic activity">
    <reaction evidence="1">
        <text>(2S,6S)-2,6-diaminopimelate = meso-2,6-diaminopimelate</text>
        <dbReference type="Rhea" id="RHEA:15393"/>
        <dbReference type="ChEBI" id="CHEBI:57609"/>
        <dbReference type="ChEBI" id="CHEBI:57791"/>
        <dbReference type="EC" id="5.1.1.7"/>
    </reaction>
</comment>
<comment type="pathway">
    <text evidence="1">Amino-acid biosynthesis; L-lysine biosynthesis via DAP pathway; DL-2,6-diaminopimelate from LL-2,6-diaminopimelate: step 1/1.</text>
</comment>
<comment type="subunit">
    <text evidence="1">Homodimer.</text>
</comment>
<comment type="subcellular location">
    <subcellularLocation>
        <location evidence="1">Cytoplasm</location>
    </subcellularLocation>
</comment>
<comment type="similarity">
    <text evidence="1">Belongs to the diaminopimelate epimerase family.</text>
</comment>
<protein>
    <recommendedName>
        <fullName evidence="1">Diaminopimelate epimerase</fullName>
        <shortName evidence="1">DAP epimerase</shortName>
        <ecNumber evidence="1">5.1.1.7</ecNumber>
    </recommendedName>
    <alternativeName>
        <fullName evidence="1">PLP-independent amino acid racemase</fullName>
    </alternativeName>
</protein>
<dbReference type="EC" id="5.1.1.7" evidence="1"/>
<dbReference type="EMBL" id="CP000724">
    <property type="protein sequence ID" value="ABR48943.1"/>
    <property type="molecule type" value="Genomic_DNA"/>
</dbReference>
<dbReference type="RefSeq" id="WP_012063914.1">
    <property type="nucleotide sequence ID" value="NC_009633.1"/>
</dbReference>
<dbReference type="SMR" id="A6TRX5"/>
<dbReference type="STRING" id="293826.Amet_2793"/>
<dbReference type="KEGG" id="amt:Amet_2793"/>
<dbReference type="eggNOG" id="COG0253">
    <property type="taxonomic scope" value="Bacteria"/>
</dbReference>
<dbReference type="HOGENOM" id="CLU_053306_3_0_9"/>
<dbReference type="OrthoDB" id="9805408at2"/>
<dbReference type="UniPathway" id="UPA00034">
    <property type="reaction ID" value="UER00025"/>
</dbReference>
<dbReference type="Proteomes" id="UP000001572">
    <property type="component" value="Chromosome"/>
</dbReference>
<dbReference type="GO" id="GO:0005829">
    <property type="term" value="C:cytosol"/>
    <property type="evidence" value="ECO:0007669"/>
    <property type="project" value="TreeGrafter"/>
</dbReference>
<dbReference type="GO" id="GO:0008837">
    <property type="term" value="F:diaminopimelate epimerase activity"/>
    <property type="evidence" value="ECO:0007669"/>
    <property type="project" value="UniProtKB-UniRule"/>
</dbReference>
<dbReference type="GO" id="GO:0009089">
    <property type="term" value="P:lysine biosynthetic process via diaminopimelate"/>
    <property type="evidence" value="ECO:0007669"/>
    <property type="project" value="UniProtKB-UniRule"/>
</dbReference>
<dbReference type="FunFam" id="3.10.310.10:FF:000001">
    <property type="entry name" value="Diaminopimelate epimerase"/>
    <property type="match status" value="1"/>
</dbReference>
<dbReference type="Gene3D" id="3.10.310.10">
    <property type="entry name" value="Diaminopimelate Epimerase, Chain A, domain 1"/>
    <property type="match status" value="2"/>
</dbReference>
<dbReference type="HAMAP" id="MF_00197">
    <property type="entry name" value="DAP_epimerase"/>
    <property type="match status" value="1"/>
</dbReference>
<dbReference type="InterPro" id="IPR018510">
    <property type="entry name" value="DAP_epimerase_AS"/>
</dbReference>
<dbReference type="InterPro" id="IPR001653">
    <property type="entry name" value="DAP_epimerase_DapF"/>
</dbReference>
<dbReference type="NCBIfam" id="TIGR00652">
    <property type="entry name" value="DapF"/>
    <property type="match status" value="1"/>
</dbReference>
<dbReference type="PANTHER" id="PTHR31689:SF0">
    <property type="entry name" value="DIAMINOPIMELATE EPIMERASE"/>
    <property type="match status" value="1"/>
</dbReference>
<dbReference type="PANTHER" id="PTHR31689">
    <property type="entry name" value="DIAMINOPIMELATE EPIMERASE, CHLOROPLASTIC"/>
    <property type="match status" value="1"/>
</dbReference>
<dbReference type="Pfam" id="PF01678">
    <property type="entry name" value="DAP_epimerase"/>
    <property type="match status" value="2"/>
</dbReference>
<dbReference type="SUPFAM" id="SSF54506">
    <property type="entry name" value="Diaminopimelate epimerase-like"/>
    <property type="match status" value="2"/>
</dbReference>
<dbReference type="PROSITE" id="PS01326">
    <property type="entry name" value="DAP_EPIMERASE"/>
    <property type="match status" value="1"/>
</dbReference>
<accession>A6TRX5</accession>
<name>DAPF_ALKMQ</name>
<reference key="1">
    <citation type="journal article" date="2016" name="Genome Announc.">
        <title>Complete genome sequence of Alkaliphilus metalliredigens strain QYMF, an alkaliphilic and metal-reducing bacterium isolated from borax-contaminated leachate ponds.</title>
        <authorList>
            <person name="Hwang C."/>
            <person name="Copeland A."/>
            <person name="Lucas S."/>
            <person name="Lapidus A."/>
            <person name="Barry K."/>
            <person name="Detter J.C."/>
            <person name="Glavina Del Rio T."/>
            <person name="Hammon N."/>
            <person name="Israni S."/>
            <person name="Dalin E."/>
            <person name="Tice H."/>
            <person name="Pitluck S."/>
            <person name="Chertkov O."/>
            <person name="Brettin T."/>
            <person name="Bruce D."/>
            <person name="Han C."/>
            <person name="Schmutz J."/>
            <person name="Larimer F."/>
            <person name="Land M.L."/>
            <person name="Hauser L."/>
            <person name="Kyrpides N."/>
            <person name="Mikhailova N."/>
            <person name="Ye Q."/>
            <person name="Zhou J."/>
            <person name="Richardson P."/>
            <person name="Fields M.W."/>
        </authorList>
    </citation>
    <scope>NUCLEOTIDE SEQUENCE [LARGE SCALE GENOMIC DNA]</scope>
    <source>
        <strain>QYMF</strain>
    </source>
</reference>
<feature type="chain" id="PRO_1000058535" description="Diaminopimelate epimerase">
    <location>
        <begin position="1"/>
        <end position="283"/>
    </location>
</feature>
<feature type="active site" description="Proton donor" evidence="1">
    <location>
        <position position="74"/>
    </location>
</feature>
<feature type="active site" description="Proton acceptor" evidence="1">
    <location>
        <position position="223"/>
    </location>
</feature>
<feature type="binding site" evidence="1">
    <location>
        <position position="13"/>
    </location>
    <ligand>
        <name>substrate</name>
    </ligand>
</feature>
<feature type="binding site" evidence="1">
    <location>
        <position position="65"/>
    </location>
    <ligand>
        <name>substrate</name>
    </ligand>
</feature>
<feature type="binding site" evidence="1">
    <location>
        <begin position="75"/>
        <end position="76"/>
    </location>
    <ligand>
        <name>substrate</name>
    </ligand>
</feature>
<feature type="binding site" evidence="1">
    <location>
        <position position="196"/>
    </location>
    <ligand>
        <name>substrate</name>
    </ligand>
</feature>
<feature type="binding site" evidence="1">
    <location>
        <begin position="214"/>
        <end position="215"/>
    </location>
    <ligand>
        <name>substrate</name>
    </ligand>
</feature>
<feature type="binding site" evidence="1">
    <location>
        <begin position="224"/>
        <end position="225"/>
    </location>
    <ligand>
        <name>substrate</name>
    </ligand>
</feature>
<feature type="site" description="Could be important to modulate the pK values of the two catalytic cysteine residues" evidence="1">
    <location>
        <position position="165"/>
    </location>
</feature>
<feature type="site" description="Could be important to modulate the pK values of the two catalytic cysteine residues" evidence="1">
    <location>
        <position position="214"/>
    </location>
</feature>
<evidence type="ECO:0000255" key="1">
    <source>
        <dbReference type="HAMAP-Rule" id="MF_00197"/>
    </source>
</evidence>